<gene>
    <name evidence="1" type="primary">yejK</name>
    <name type="ordered locus">EC55989_2440</name>
</gene>
<organism>
    <name type="scientific">Escherichia coli (strain 55989 / EAEC)</name>
    <dbReference type="NCBI Taxonomy" id="585055"/>
    <lineage>
        <taxon>Bacteria</taxon>
        <taxon>Pseudomonadati</taxon>
        <taxon>Pseudomonadota</taxon>
        <taxon>Gammaproteobacteria</taxon>
        <taxon>Enterobacterales</taxon>
        <taxon>Enterobacteriaceae</taxon>
        <taxon>Escherichia</taxon>
    </lineage>
</organism>
<dbReference type="EMBL" id="CU928145">
    <property type="protein sequence ID" value="CAU98310.1"/>
    <property type="molecule type" value="Genomic_DNA"/>
</dbReference>
<dbReference type="RefSeq" id="WP_000050789.1">
    <property type="nucleotide sequence ID" value="NZ_CP028304.1"/>
</dbReference>
<dbReference type="SMR" id="B7LAL0"/>
<dbReference type="GeneID" id="75206440"/>
<dbReference type="KEGG" id="eck:EC55989_2440"/>
<dbReference type="HOGENOM" id="CLU_063050_0_1_6"/>
<dbReference type="Proteomes" id="UP000000746">
    <property type="component" value="Chromosome"/>
</dbReference>
<dbReference type="GO" id="GO:0043590">
    <property type="term" value="C:bacterial nucleoid"/>
    <property type="evidence" value="ECO:0007669"/>
    <property type="project" value="TreeGrafter"/>
</dbReference>
<dbReference type="GO" id="GO:0005737">
    <property type="term" value="C:cytoplasm"/>
    <property type="evidence" value="ECO:0007669"/>
    <property type="project" value="UniProtKB-UniRule"/>
</dbReference>
<dbReference type="GO" id="GO:0003690">
    <property type="term" value="F:double-stranded DNA binding"/>
    <property type="evidence" value="ECO:0007669"/>
    <property type="project" value="TreeGrafter"/>
</dbReference>
<dbReference type="GO" id="GO:0003727">
    <property type="term" value="F:single-stranded RNA binding"/>
    <property type="evidence" value="ECO:0007669"/>
    <property type="project" value="TreeGrafter"/>
</dbReference>
<dbReference type="HAMAP" id="MF_00730">
    <property type="entry name" value="NdpA"/>
    <property type="match status" value="1"/>
</dbReference>
<dbReference type="InterPro" id="IPR007358">
    <property type="entry name" value="Nucleoid_associated_NdpA"/>
</dbReference>
<dbReference type="NCBIfam" id="NF001557">
    <property type="entry name" value="PRK00378.1"/>
    <property type="match status" value="1"/>
</dbReference>
<dbReference type="PANTHER" id="PTHR38772">
    <property type="match status" value="1"/>
</dbReference>
<dbReference type="PANTHER" id="PTHR38772:SF1">
    <property type="entry name" value="NUCLEOID-ASSOCIATED PROTEIN YEJK"/>
    <property type="match status" value="1"/>
</dbReference>
<dbReference type="Pfam" id="PF04245">
    <property type="entry name" value="NA37"/>
    <property type="match status" value="1"/>
</dbReference>
<accession>B7LAL0</accession>
<name>NDPA_ECO55</name>
<sequence length="335" mass="37823">MSLDINQIALHQLIKRDEQNLELVLRDSLLEPTETVVEMVAELHRVYSAKNKAYGLFSEESELAQTLRLQRQGEEDFLAFSRAATGRLRDELAKYPFADGGFVLFCHYRYLAVEYLLVAVLSNLSSMRVNENLDINPTHYLDINHADIVARIDLTEWETNPESTRYLTFLKGRVGRKVADFFMDFLGASEGLNAKAQNRGLLQAVDDFTAEAQLDKAERQNVRQQVYSYCNEQLQAGEEIELESLSKELAGVSEVSFTEFAAEKGYELEESFPADRSTLRQLTKFAGSGGGLTINFDAMLLGERIFWDPATDTLTIKGTPPNLRDQLQRRTSGGN</sequence>
<protein>
    <recommendedName>
        <fullName evidence="1">Nucleoid-associated protein YejK</fullName>
    </recommendedName>
</protein>
<feature type="chain" id="PRO_1000191553" description="Nucleoid-associated protein YejK">
    <location>
        <begin position="1"/>
        <end position="335"/>
    </location>
</feature>
<evidence type="ECO:0000255" key="1">
    <source>
        <dbReference type="HAMAP-Rule" id="MF_00730"/>
    </source>
</evidence>
<comment type="subcellular location">
    <subcellularLocation>
        <location evidence="1">Cytoplasm</location>
        <location evidence="1">Nucleoid</location>
    </subcellularLocation>
</comment>
<comment type="similarity">
    <text evidence="1">Belongs to the YejK family.</text>
</comment>
<proteinExistence type="inferred from homology"/>
<keyword id="KW-0963">Cytoplasm</keyword>
<keyword id="KW-1185">Reference proteome</keyword>
<reference key="1">
    <citation type="journal article" date="2009" name="PLoS Genet.">
        <title>Organised genome dynamics in the Escherichia coli species results in highly diverse adaptive paths.</title>
        <authorList>
            <person name="Touchon M."/>
            <person name="Hoede C."/>
            <person name="Tenaillon O."/>
            <person name="Barbe V."/>
            <person name="Baeriswyl S."/>
            <person name="Bidet P."/>
            <person name="Bingen E."/>
            <person name="Bonacorsi S."/>
            <person name="Bouchier C."/>
            <person name="Bouvet O."/>
            <person name="Calteau A."/>
            <person name="Chiapello H."/>
            <person name="Clermont O."/>
            <person name="Cruveiller S."/>
            <person name="Danchin A."/>
            <person name="Diard M."/>
            <person name="Dossat C."/>
            <person name="Karoui M.E."/>
            <person name="Frapy E."/>
            <person name="Garry L."/>
            <person name="Ghigo J.M."/>
            <person name="Gilles A.M."/>
            <person name="Johnson J."/>
            <person name="Le Bouguenec C."/>
            <person name="Lescat M."/>
            <person name="Mangenot S."/>
            <person name="Martinez-Jehanne V."/>
            <person name="Matic I."/>
            <person name="Nassif X."/>
            <person name="Oztas S."/>
            <person name="Petit M.A."/>
            <person name="Pichon C."/>
            <person name="Rouy Z."/>
            <person name="Ruf C.S."/>
            <person name="Schneider D."/>
            <person name="Tourret J."/>
            <person name="Vacherie B."/>
            <person name="Vallenet D."/>
            <person name="Medigue C."/>
            <person name="Rocha E.P.C."/>
            <person name="Denamur E."/>
        </authorList>
    </citation>
    <scope>NUCLEOTIDE SEQUENCE [LARGE SCALE GENOMIC DNA]</scope>
    <source>
        <strain>55989 / EAEC</strain>
    </source>
</reference>